<feature type="chain" id="PRO_0000338643" description="Phytanoyl-CoA hydroxylase interacting protein-like">
    <location>
        <begin position="1"/>
        <end position="376"/>
    </location>
</feature>
<feature type="domain" description="Fibronectin type-III" evidence="4">
    <location>
        <begin position="52"/>
        <end position="161"/>
    </location>
</feature>
<feature type="modified residue" description="Phosphoserine" evidence="2">
    <location>
        <position position="12"/>
    </location>
</feature>
<feature type="modified residue" description="Phosphoserine" evidence="2">
    <location>
        <position position="15"/>
    </location>
</feature>
<feature type="modified residue" description="Phosphoserine" evidence="2">
    <location>
        <position position="25"/>
    </location>
</feature>
<feature type="glycosylation site" description="N-linked (GlcNAc...) asparagine" evidence="3">
    <location>
        <position position="23"/>
    </location>
</feature>
<feature type="glycosylation site" description="N-linked (GlcNAc...) asparagine" evidence="3">
    <location>
        <position position="37"/>
    </location>
</feature>
<feature type="splice variant" id="VSP_034071" description="In isoform 2." evidence="5">
    <original>FEIAAEKLFNPNTNLYFGDFYCMYTAYHYVILVIAPV</original>
    <variation>SPDPLLSIFVTQMFSTEACTCHCHQERATTSQISELL</variation>
    <location>
        <begin position="252"/>
        <end position="288"/>
    </location>
</feature>
<feature type="splice variant" id="VSP_034072" description="In isoform 2." evidence="5">
    <location>
        <begin position="289"/>
        <end position="376"/>
    </location>
</feature>
<protein>
    <recommendedName>
        <fullName>Phytanoyl-CoA hydroxylase interacting protein-like</fullName>
    </recommendedName>
</protein>
<dbReference type="EMBL" id="AAFC03071975">
    <property type="status" value="NOT_ANNOTATED_CDS"/>
    <property type="molecule type" value="Genomic_DNA"/>
</dbReference>
<dbReference type="EMBL" id="BC109692">
    <property type="protein sequence ID" value="AAI09693.1"/>
    <property type="molecule type" value="mRNA"/>
</dbReference>
<dbReference type="RefSeq" id="NP_001073266.1">
    <molecule id="Q32L96-2"/>
    <property type="nucleotide sequence ID" value="NM_001079798.1"/>
</dbReference>
<dbReference type="RefSeq" id="XP_010818797.1">
    <molecule id="Q32L96-1"/>
    <property type="nucleotide sequence ID" value="XM_010820495.3"/>
</dbReference>
<dbReference type="SMR" id="Q32L96"/>
<dbReference type="FunCoup" id="Q32L96">
    <property type="interactions" value="811"/>
</dbReference>
<dbReference type="STRING" id="9913.ENSBTAP00000062431"/>
<dbReference type="GlyCosmos" id="Q32L96">
    <property type="glycosylation" value="2 sites, No reported glycans"/>
</dbReference>
<dbReference type="GlyGen" id="Q32L96">
    <property type="glycosylation" value="2 sites"/>
</dbReference>
<dbReference type="PaxDb" id="9913-ENSBTAP00000031317"/>
<dbReference type="Ensembl" id="ENSBTAT00000031362.6">
    <molecule id="Q32L96-2"/>
    <property type="protein sequence ID" value="ENSBTAP00000031317.4"/>
    <property type="gene ID" value="ENSBTAG00000010947.7"/>
</dbReference>
<dbReference type="Ensembl" id="ENSBTAT00000110668.1">
    <molecule id="Q32L96-1"/>
    <property type="protein sequence ID" value="ENSBTAP00000077390.1"/>
    <property type="gene ID" value="ENSBTAG00000010947.7"/>
</dbReference>
<dbReference type="GeneID" id="780878"/>
<dbReference type="KEGG" id="bta:780878"/>
<dbReference type="CTD" id="84457"/>
<dbReference type="VEuPathDB" id="HostDB:ENSBTAG00000010947"/>
<dbReference type="eggNOG" id="ENOG502QQIT">
    <property type="taxonomic scope" value="Eukaryota"/>
</dbReference>
<dbReference type="GeneTree" id="ENSGT00390000014563"/>
<dbReference type="HOGENOM" id="CLU_054218_2_1_1"/>
<dbReference type="InParanoid" id="Q32L96"/>
<dbReference type="OMA" id="KINCITC"/>
<dbReference type="OrthoDB" id="6101761at2759"/>
<dbReference type="TreeFam" id="TF314485"/>
<dbReference type="Proteomes" id="UP000009136">
    <property type="component" value="Chromosome 28"/>
</dbReference>
<dbReference type="Bgee" id="ENSBTAG00000010947">
    <property type="expression patterns" value="Expressed in spermatid and 67 other cell types or tissues"/>
</dbReference>
<dbReference type="GO" id="GO:0005737">
    <property type="term" value="C:cytoplasm"/>
    <property type="evidence" value="ECO:0000318"/>
    <property type="project" value="GO_Central"/>
</dbReference>
<dbReference type="CDD" id="cd00063">
    <property type="entry name" value="FN3"/>
    <property type="match status" value="1"/>
</dbReference>
<dbReference type="FunFam" id="2.60.40.10:FF:000277">
    <property type="entry name" value="Phytanoyl-CoA hydroxylase-interacting protein-like protein"/>
    <property type="match status" value="1"/>
</dbReference>
<dbReference type="Gene3D" id="2.60.40.10">
    <property type="entry name" value="Immunoglobulins"/>
    <property type="match status" value="1"/>
</dbReference>
<dbReference type="InterPro" id="IPR003961">
    <property type="entry name" value="FN3_dom"/>
</dbReference>
<dbReference type="InterPro" id="IPR036116">
    <property type="entry name" value="FN3_sf"/>
</dbReference>
<dbReference type="InterPro" id="IPR013783">
    <property type="entry name" value="Ig-like_fold"/>
</dbReference>
<dbReference type="InterPro" id="IPR042868">
    <property type="entry name" value="PHYHIP/PHYHIPL"/>
</dbReference>
<dbReference type="InterPro" id="IPR045545">
    <property type="entry name" value="PHYIP/PHIPL_C"/>
</dbReference>
<dbReference type="PANTHER" id="PTHR15698:SF8">
    <property type="entry name" value="PHYTANOYL-COA HYDROXYLASE-INTERACTING PROTEIN-LIKE"/>
    <property type="match status" value="1"/>
</dbReference>
<dbReference type="PANTHER" id="PTHR15698">
    <property type="entry name" value="PROTEIN CBG15099"/>
    <property type="match status" value="1"/>
</dbReference>
<dbReference type="Pfam" id="PF00041">
    <property type="entry name" value="fn3"/>
    <property type="match status" value="1"/>
</dbReference>
<dbReference type="Pfam" id="PF19281">
    <property type="entry name" value="PHYHIP_C"/>
    <property type="match status" value="1"/>
</dbReference>
<dbReference type="SMART" id="SM00060">
    <property type="entry name" value="FN3"/>
    <property type="match status" value="1"/>
</dbReference>
<dbReference type="SUPFAM" id="SSF49265">
    <property type="entry name" value="Fibronectin type III"/>
    <property type="match status" value="1"/>
</dbReference>
<dbReference type="PROSITE" id="PS50853">
    <property type="entry name" value="FN3"/>
    <property type="match status" value="1"/>
</dbReference>
<proteinExistence type="evidence at transcript level"/>
<organism>
    <name type="scientific">Bos taurus</name>
    <name type="common">Bovine</name>
    <dbReference type="NCBI Taxonomy" id="9913"/>
    <lineage>
        <taxon>Eukaryota</taxon>
        <taxon>Metazoa</taxon>
        <taxon>Chordata</taxon>
        <taxon>Craniata</taxon>
        <taxon>Vertebrata</taxon>
        <taxon>Euteleostomi</taxon>
        <taxon>Mammalia</taxon>
        <taxon>Eutheria</taxon>
        <taxon>Laurasiatheria</taxon>
        <taxon>Artiodactyla</taxon>
        <taxon>Ruminantia</taxon>
        <taxon>Pecora</taxon>
        <taxon>Bovidae</taxon>
        <taxon>Bovinae</taxon>
        <taxon>Bos</taxon>
    </lineage>
</organism>
<gene>
    <name type="primary">PHYHIPL</name>
</gene>
<comment type="function">
    <text evidence="1">May play a role in the development of the central system.</text>
</comment>
<comment type="alternative products">
    <event type="alternative splicing"/>
    <isoform>
        <id>Q32L96-1</id>
        <name>1</name>
        <sequence type="displayed"/>
    </isoform>
    <isoform>
        <id>Q32L96-2</id>
        <name>2</name>
        <sequence type="described" ref="VSP_034071 VSP_034072"/>
    </isoform>
</comment>
<comment type="similarity">
    <text evidence="6">Belongs to the PHYHIP family.</text>
</comment>
<reference key="1">
    <citation type="journal article" date="2009" name="Science">
        <title>The genome sequence of taurine cattle: a window to ruminant biology and evolution.</title>
        <authorList>
            <consortium name="The bovine genome sequencing and analysis consortium"/>
        </authorList>
    </citation>
    <scope>NUCLEOTIDE SEQUENCE [LARGE SCALE GENOMIC DNA]</scope>
    <source>
        <strain>Hereford</strain>
    </source>
</reference>
<reference key="2">
    <citation type="submission" date="2005-11" db="EMBL/GenBank/DDBJ databases">
        <authorList>
            <consortium name="NIH - Mammalian Gene Collection (MGC) project"/>
        </authorList>
    </citation>
    <scope>NUCLEOTIDE SEQUENCE [LARGE SCALE MRNA] (ISOFORM 2)</scope>
    <source>
        <strain>Crossbred X Angus</strain>
        <tissue>Liver</tissue>
    </source>
</reference>
<keyword id="KW-0025">Alternative splicing</keyword>
<keyword id="KW-0325">Glycoprotein</keyword>
<keyword id="KW-0597">Phosphoprotein</keyword>
<keyword id="KW-1185">Reference proteome</keyword>
<evidence type="ECO:0000250" key="1"/>
<evidence type="ECO:0000250" key="2">
    <source>
        <dbReference type="UniProtKB" id="Q8BGT8"/>
    </source>
</evidence>
<evidence type="ECO:0000255" key="3"/>
<evidence type="ECO:0000255" key="4">
    <source>
        <dbReference type="PROSITE-ProRule" id="PRU00316"/>
    </source>
</evidence>
<evidence type="ECO:0000303" key="5">
    <source ref="2"/>
</evidence>
<evidence type="ECO:0000305" key="6"/>
<accession>Q32L96</accession>
<sequence length="376" mass="42562">MEVPRLDHALNSPTSPCEEVIKNLSLEAIQLCDRDGNKSQDSGIAEMEELPVPRNIKISNITCDSFKISWEMDSKSKDRITHYFIDLNKKENKNSNKFKHKDVPTKLVAKAVPLPMTVRGHWFLSPRTEYTVAVQTASKQVDGDYVVSEWSEIIEFCTADYSKVHLTQLLEKAEVIAGRMLKFSVFYRNQHKEYFDYIREHHGNAMQPSVKDNSGSHGSPISGKLEGIFFSCSTEFNTGKPPQDSPYGRYRFEIAAEKLFNPNTNLYFGDFYCMYTAYHYVILVIAPVGSPGDEFCKQRLPQLNSQDNKFLTCREEDGMLVYHHAQDVILEVIYTDPVGLSLGTVAEITGHQLMSLSTANAKKDPSCKTCNISVGR</sequence>
<name>PHIPL_BOVIN</name>